<sequence>MMNVIEGILNTTLGVVFTWVGWKTYKILWKYTPYSYPNARVRAMEAKLLTEQRFNELAESRTLQNFVASLEDTDYKETLSNVSSYSVEEIERALDASLAKTYELMFKILPKRSRDFFRLMMEEWDVRNIANVVKAKLANEPASDYIIELGPMLPKVKAMAEAKTLEEILVILEGTPYEGPYQELIAGNIDVSTFETELYRMYYKKLLNYARSRKDDEKTLLTEFIKLKIDKLNLMTTLRGKLAGLSAKEIRSMLIPGGSLDVEPLLHIDSIEMTLAQLDSTEYGEFIRKVREEAEKDISVIERAFDEHLIKKVTEFDRFHPLSIAAPLAYVLKKEREVRKLRAMVKLIGDGLEPEVIKEFVGEVA</sequence>
<reference key="1">
    <citation type="journal article" date="2005" name="Genome Res.">
        <title>Complete genome sequence of the hyperthermophilic archaeon Thermococcus kodakaraensis KOD1 and comparison with Pyrococcus genomes.</title>
        <authorList>
            <person name="Fukui T."/>
            <person name="Atomi H."/>
            <person name="Kanai T."/>
            <person name="Matsumi R."/>
            <person name="Fujiwara S."/>
            <person name="Imanaka T."/>
        </authorList>
    </citation>
    <scope>NUCLEOTIDE SEQUENCE [LARGE SCALE GENOMIC DNA]</scope>
    <source>
        <strain>ATCC BAA-918 / JCM 12380 / KOD1</strain>
    </source>
</reference>
<proteinExistence type="inferred from homology"/>
<feature type="chain" id="PRO_0000119372" description="A-type ATP synthase subunit C">
    <location>
        <begin position="1"/>
        <end position="365"/>
    </location>
</feature>
<dbReference type="EMBL" id="AP006878">
    <property type="protein sequence ID" value="BAD85789.1"/>
    <property type="molecule type" value="Genomic_DNA"/>
</dbReference>
<dbReference type="RefSeq" id="WP_011250551.1">
    <property type="nucleotide sequence ID" value="NC_006624.1"/>
</dbReference>
<dbReference type="SMR" id="Q5JDR9"/>
<dbReference type="FunCoup" id="Q5JDR9">
    <property type="interactions" value="1"/>
</dbReference>
<dbReference type="STRING" id="69014.TK1600"/>
<dbReference type="EnsemblBacteria" id="BAD85789">
    <property type="protein sequence ID" value="BAD85789"/>
    <property type="gene ID" value="TK1600"/>
</dbReference>
<dbReference type="GeneID" id="78448128"/>
<dbReference type="KEGG" id="tko:TK1600"/>
<dbReference type="PATRIC" id="fig|69014.16.peg.1559"/>
<dbReference type="eggNOG" id="arCOG02459">
    <property type="taxonomic scope" value="Archaea"/>
</dbReference>
<dbReference type="HOGENOM" id="CLU_059311_0_0_2"/>
<dbReference type="InParanoid" id="Q5JDR9"/>
<dbReference type="OrthoDB" id="4272at2157"/>
<dbReference type="PhylomeDB" id="Q5JDR9"/>
<dbReference type="Proteomes" id="UP000000536">
    <property type="component" value="Chromosome"/>
</dbReference>
<dbReference type="GO" id="GO:0005886">
    <property type="term" value="C:plasma membrane"/>
    <property type="evidence" value="ECO:0007669"/>
    <property type="project" value="UniProtKB-SubCell"/>
</dbReference>
<dbReference type="GO" id="GO:0033179">
    <property type="term" value="C:proton-transporting V-type ATPase, V0 domain"/>
    <property type="evidence" value="ECO:0007669"/>
    <property type="project" value="InterPro"/>
</dbReference>
<dbReference type="GO" id="GO:0005524">
    <property type="term" value="F:ATP binding"/>
    <property type="evidence" value="ECO:0007669"/>
    <property type="project" value="UniProtKB-UniRule"/>
</dbReference>
<dbReference type="GO" id="GO:0046933">
    <property type="term" value="F:proton-transporting ATP synthase activity, rotational mechanism"/>
    <property type="evidence" value="ECO:0007669"/>
    <property type="project" value="UniProtKB-UniRule"/>
</dbReference>
<dbReference type="GO" id="GO:0046961">
    <property type="term" value="F:proton-transporting ATPase activity, rotational mechanism"/>
    <property type="evidence" value="ECO:0007669"/>
    <property type="project" value="InterPro"/>
</dbReference>
<dbReference type="GO" id="GO:0042777">
    <property type="term" value="P:proton motive force-driven plasma membrane ATP synthesis"/>
    <property type="evidence" value="ECO:0007669"/>
    <property type="project" value="UniProtKB-UniRule"/>
</dbReference>
<dbReference type="Gene3D" id="1.10.132.50">
    <property type="entry name" value="ATP synthase (C/AC39) subunit, domain 3"/>
    <property type="match status" value="1"/>
</dbReference>
<dbReference type="Gene3D" id="1.20.1690.10">
    <property type="entry name" value="V-type ATP synthase subunit C domain"/>
    <property type="match status" value="2"/>
</dbReference>
<dbReference type="HAMAP" id="MF_00314">
    <property type="entry name" value="ATP_synth_C_arch"/>
    <property type="match status" value="1"/>
</dbReference>
<dbReference type="InterPro" id="IPR036079">
    <property type="entry name" value="ATPase_csu/dsu_sf"/>
</dbReference>
<dbReference type="InterPro" id="IPR014272">
    <property type="entry name" value="ATPase_V0-cplx_csu"/>
</dbReference>
<dbReference type="InterPro" id="IPR002843">
    <property type="entry name" value="ATPase_V0-cplx_csu/dsu"/>
</dbReference>
<dbReference type="InterPro" id="IPR050873">
    <property type="entry name" value="V-ATPase_V0D/AC39_subunit"/>
</dbReference>
<dbReference type="InterPro" id="IPR035067">
    <property type="entry name" value="V-type_ATPase_csu/dsu"/>
</dbReference>
<dbReference type="InterPro" id="IPR044911">
    <property type="entry name" value="V-type_ATPase_csu/dsu_dom_3"/>
</dbReference>
<dbReference type="NCBIfam" id="TIGR02923">
    <property type="entry name" value="AhaC"/>
    <property type="match status" value="1"/>
</dbReference>
<dbReference type="NCBIfam" id="NF002269">
    <property type="entry name" value="PRK01198.1-5"/>
    <property type="match status" value="1"/>
</dbReference>
<dbReference type="PANTHER" id="PTHR38682">
    <property type="entry name" value="V-TYPE ATP SYNTHASE SUBUNIT C"/>
    <property type="match status" value="1"/>
</dbReference>
<dbReference type="PANTHER" id="PTHR38682:SF1">
    <property type="entry name" value="V-TYPE ATP SYNTHASE SUBUNIT C"/>
    <property type="match status" value="1"/>
</dbReference>
<dbReference type="Pfam" id="PF01992">
    <property type="entry name" value="vATP-synt_AC39"/>
    <property type="match status" value="1"/>
</dbReference>
<dbReference type="SUPFAM" id="SSF103486">
    <property type="entry name" value="V-type ATP synthase subunit C"/>
    <property type="match status" value="1"/>
</dbReference>
<gene>
    <name evidence="1" type="primary">atpC</name>
    <name type="ordered locus">TK1600</name>
</gene>
<protein>
    <recommendedName>
        <fullName evidence="1">A-type ATP synthase subunit C</fullName>
    </recommendedName>
</protein>
<comment type="function">
    <text evidence="1">Component of the A-type ATP synthase that produces ATP from ADP in the presence of a proton gradient across the membrane.</text>
</comment>
<comment type="subunit">
    <text evidence="1">Has multiple subunits with at least A(3), B(3), C, D, E, F, H, I and proteolipid K(x).</text>
</comment>
<comment type="subcellular location">
    <subcellularLocation>
        <location evidence="1">Cell membrane</location>
        <topology evidence="1">Peripheral membrane protein</topology>
    </subcellularLocation>
</comment>
<comment type="similarity">
    <text evidence="1">Belongs to the V-ATPase V0D/AC39 subunit family.</text>
</comment>
<accession>Q5JDR9</accession>
<keyword id="KW-0066">ATP synthesis</keyword>
<keyword id="KW-1003">Cell membrane</keyword>
<keyword id="KW-0375">Hydrogen ion transport</keyword>
<keyword id="KW-0406">Ion transport</keyword>
<keyword id="KW-0472">Membrane</keyword>
<keyword id="KW-1185">Reference proteome</keyword>
<keyword id="KW-0813">Transport</keyword>
<name>AATC_THEKO</name>
<evidence type="ECO:0000255" key="1">
    <source>
        <dbReference type="HAMAP-Rule" id="MF_00314"/>
    </source>
</evidence>
<organism>
    <name type="scientific">Thermococcus kodakarensis (strain ATCC BAA-918 / JCM 12380 / KOD1)</name>
    <name type="common">Pyrococcus kodakaraensis (strain KOD1)</name>
    <dbReference type="NCBI Taxonomy" id="69014"/>
    <lineage>
        <taxon>Archaea</taxon>
        <taxon>Methanobacteriati</taxon>
        <taxon>Methanobacteriota</taxon>
        <taxon>Thermococci</taxon>
        <taxon>Thermococcales</taxon>
        <taxon>Thermococcaceae</taxon>
        <taxon>Thermococcus</taxon>
    </lineage>
</organism>